<protein>
    <recommendedName>
        <fullName evidence="1">Large ribosomal subunit protein uL24</fullName>
    </recommendedName>
    <alternativeName>
        <fullName evidence="2">50S ribosomal protein L24</fullName>
    </alternativeName>
</protein>
<feature type="chain" id="PRO_0000355727" description="Large ribosomal subunit protein uL24">
    <location>
        <begin position="1"/>
        <end position="103"/>
    </location>
</feature>
<dbReference type="EMBL" id="CP000805">
    <property type="protein sequence ID" value="ACD70626.1"/>
    <property type="molecule type" value="Genomic_DNA"/>
</dbReference>
<dbReference type="RefSeq" id="WP_010881647.1">
    <property type="nucleotide sequence ID" value="NC_021508.1"/>
</dbReference>
<dbReference type="SMR" id="B2S2E7"/>
<dbReference type="GeneID" id="93875988"/>
<dbReference type="KEGG" id="tpp:TPASS_0200"/>
<dbReference type="PATRIC" id="fig|455434.6.peg.203"/>
<dbReference type="Proteomes" id="UP000001202">
    <property type="component" value="Chromosome"/>
</dbReference>
<dbReference type="GO" id="GO:1990904">
    <property type="term" value="C:ribonucleoprotein complex"/>
    <property type="evidence" value="ECO:0007669"/>
    <property type="project" value="UniProtKB-KW"/>
</dbReference>
<dbReference type="GO" id="GO:0005840">
    <property type="term" value="C:ribosome"/>
    <property type="evidence" value="ECO:0007669"/>
    <property type="project" value="UniProtKB-KW"/>
</dbReference>
<dbReference type="GO" id="GO:0019843">
    <property type="term" value="F:rRNA binding"/>
    <property type="evidence" value="ECO:0007669"/>
    <property type="project" value="UniProtKB-UniRule"/>
</dbReference>
<dbReference type="GO" id="GO:0003735">
    <property type="term" value="F:structural constituent of ribosome"/>
    <property type="evidence" value="ECO:0007669"/>
    <property type="project" value="InterPro"/>
</dbReference>
<dbReference type="GO" id="GO:0006412">
    <property type="term" value="P:translation"/>
    <property type="evidence" value="ECO:0007669"/>
    <property type="project" value="UniProtKB-UniRule"/>
</dbReference>
<dbReference type="CDD" id="cd06089">
    <property type="entry name" value="KOW_RPL26"/>
    <property type="match status" value="1"/>
</dbReference>
<dbReference type="Gene3D" id="2.30.30.30">
    <property type="match status" value="1"/>
</dbReference>
<dbReference type="HAMAP" id="MF_01326_B">
    <property type="entry name" value="Ribosomal_uL24_B"/>
    <property type="match status" value="1"/>
</dbReference>
<dbReference type="InterPro" id="IPR005824">
    <property type="entry name" value="KOW"/>
</dbReference>
<dbReference type="InterPro" id="IPR014722">
    <property type="entry name" value="Rib_uL2_dom2"/>
</dbReference>
<dbReference type="InterPro" id="IPR003256">
    <property type="entry name" value="Ribosomal_uL24"/>
</dbReference>
<dbReference type="InterPro" id="IPR005825">
    <property type="entry name" value="Ribosomal_uL24_CS"/>
</dbReference>
<dbReference type="InterPro" id="IPR041988">
    <property type="entry name" value="Ribosomal_uL24_KOW"/>
</dbReference>
<dbReference type="InterPro" id="IPR008991">
    <property type="entry name" value="Translation_prot_SH3-like_sf"/>
</dbReference>
<dbReference type="NCBIfam" id="TIGR01079">
    <property type="entry name" value="rplX_bact"/>
    <property type="match status" value="1"/>
</dbReference>
<dbReference type="PANTHER" id="PTHR12903">
    <property type="entry name" value="MITOCHONDRIAL RIBOSOMAL PROTEIN L24"/>
    <property type="match status" value="1"/>
</dbReference>
<dbReference type="Pfam" id="PF00467">
    <property type="entry name" value="KOW"/>
    <property type="match status" value="1"/>
</dbReference>
<dbReference type="Pfam" id="PF17136">
    <property type="entry name" value="ribosomal_L24"/>
    <property type="match status" value="1"/>
</dbReference>
<dbReference type="SMART" id="SM00739">
    <property type="entry name" value="KOW"/>
    <property type="match status" value="1"/>
</dbReference>
<dbReference type="SUPFAM" id="SSF50104">
    <property type="entry name" value="Translation proteins SH3-like domain"/>
    <property type="match status" value="1"/>
</dbReference>
<dbReference type="PROSITE" id="PS01108">
    <property type="entry name" value="RIBOSOMAL_L24"/>
    <property type="match status" value="1"/>
</dbReference>
<accession>B2S2E7</accession>
<keyword id="KW-0687">Ribonucleoprotein</keyword>
<keyword id="KW-0689">Ribosomal protein</keyword>
<keyword id="KW-0694">RNA-binding</keyword>
<keyword id="KW-0699">rRNA-binding</keyword>
<evidence type="ECO:0000255" key="1">
    <source>
        <dbReference type="HAMAP-Rule" id="MF_01326"/>
    </source>
</evidence>
<evidence type="ECO:0000305" key="2"/>
<sequence length="103" mass="11572">MGKTVKIRKDDMVLVIAGKDRGKRGAVLRVLRDVDRVLVQGLNMRKKTIRRKSAQDEGGIMEVEAPIHISNVMIMGKKGPTRVGYRMENGKKVRVCRKTGEVL</sequence>
<reference key="1">
    <citation type="journal article" date="2008" name="BMC Microbiol.">
        <title>Complete genome sequence of Treponema pallidum ssp. pallidum strain SS14 determined with oligonucleotide arrays.</title>
        <authorList>
            <person name="Matejkova P."/>
            <person name="Strouhal M."/>
            <person name="Smajs D."/>
            <person name="Norris S.J."/>
            <person name="Palzkill T."/>
            <person name="Petrosino J.F."/>
            <person name="Sodergren E."/>
            <person name="Norton J.E."/>
            <person name="Singh J."/>
            <person name="Richmond T.A."/>
            <person name="Molla M.N."/>
            <person name="Albert T.J."/>
            <person name="Weinstock G.M."/>
        </authorList>
    </citation>
    <scope>NUCLEOTIDE SEQUENCE [LARGE SCALE GENOMIC DNA]</scope>
    <source>
        <strain>SS14</strain>
    </source>
</reference>
<name>RL24_TREPS</name>
<proteinExistence type="inferred from homology"/>
<comment type="function">
    <text evidence="1">One of two assembly initiator proteins, it binds directly to the 5'-end of the 23S rRNA, where it nucleates assembly of the 50S subunit.</text>
</comment>
<comment type="function">
    <text evidence="1">One of the proteins that surrounds the polypeptide exit tunnel on the outside of the subunit.</text>
</comment>
<comment type="subunit">
    <text evidence="1">Part of the 50S ribosomal subunit.</text>
</comment>
<comment type="similarity">
    <text evidence="1">Belongs to the universal ribosomal protein uL24 family.</text>
</comment>
<gene>
    <name evidence="1" type="primary">rplX</name>
    <name type="ordered locus">TPASS_0200</name>
</gene>
<organism>
    <name type="scientific">Treponema pallidum subsp. pallidum (strain SS14)</name>
    <dbReference type="NCBI Taxonomy" id="455434"/>
    <lineage>
        <taxon>Bacteria</taxon>
        <taxon>Pseudomonadati</taxon>
        <taxon>Spirochaetota</taxon>
        <taxon>Spirochaetia</taxon>
        <taxon>Spirochaetales</taxon>
        <taxon>Treponemataceae</taxon>
        <taxon>Treponema</taxon>
    </lineage>
</organism>